<reference key="1">
    <citation type="journal article" date="1996" name="Microbiology">
        <title>Physical mapping of 32 genetic markers on the Pseudomonas aeruginosa PAO1 chromosome.</title>
        <authorList>
            <person name="Liao X."/>
            <person name="Charlebois I."/>
            <person name="Ouellet C."/>
            <person name="Morency M.J."/>
            <person name="Dewar K."/>
            <person name="Lightfoot J."/>
            <person name="Foster J."/>
            <person name="Siehnel R."/>
            <person name="Schweizer H."/>
            <person name="Lam J.S."/>
            <person name="Hancock R.E."/>
            <person name="Levesque R.C."/>
        </authorList>
    </citation>
    <scope>NUCLEOTIDE SEQUENCE [GENOMIC DNA]</scope>
    <source>
        <strain>ATCC 15692 / DSM 22644 / CIP 104116 / JCM 14847 / LMG 12228 / 1C / PRS 101 / PAO1</strain>
    </source>
</reference>
<reference key="2">
    <citation type="submission" date="2000-01" db="EMBL/GenBank/DDBJ databases">
        <title>Physical Mapping of 38 loci including aimE, ampC, ampR, arcA, aroK, catR, cypH, dapB, envA, envC, ftsA, ftsZ, groEL, murE, opdE, oprD, oprF, oprH, oprI, oprK, oprP, pbpB, pbpC, pheS, phoA, phoB, phoS, ponA, pyoS1, qin, rpoB, rpoH, sodB, soxR, sucC.</title>
        <authorList>
            <person name="Levesque R.C."/>
            <person name="Liao X."/>
            <person name="Lightfoot J."/>
            <person name="Charlebois I."/>
            <person name="Ouellet C."/>
            <person name="Morency M."/>
            <person name="Dewar K."/>
            <person name="Siehnel R."/>
            <person name="Lam J."/>
            <person name="Hancock R.E."/>
        </authorList>
    </citation>
    <scope>SEQUENCE REVISION TO 286</scope>
    <source>
        <strain>ATCC 15692 / DSM 22644 / CIP 104116 / JCM 14847 / LMG 12228 / 1C / PRS 101 / PAO1</strain>
    </source>
</reference>
<reference key="3">
    <citation type="journal article" date="2000" name="Nature">
        <title>Complete genome sequence of Pseudomonas aeruginosa PAO1, an opportunistic pathogen.</title>
        <authorList>
            <person name="Stover C.K."/>
            <person name="Pham X.-Q.T."/>
            <person name="Erwin A.L."/>
            <person name="Mizoguchi S.D."/>
            <person name="Warrener P."/>
            <person name="Hickey M.J."/>
            <person name="Brinkman F.S.L."/>
            <person name="Hufnagle W.O."/>
            <person name="Kowalik D.J."/>
            <person name="Lagrou M."/>
            <person name="Garber R.L."/>
            <person name="Goltry L."/>
            <person name="Tolentino E."/>
            <person name="Westbrock-Wadman S."/>
            <person name="Yuan Y."/>
            <person name="Brody L.L."/>
            <person name="Coulter S.N."/>
            <person name="Folger K.R."/>
            <person name="Kas A."/>
            <person name="Larbig K."/>
            <person name="Lim R.M."/>
            <person name="Smith K.A."/>
            <person name="Spencer D.H."/>
            <person name="Wong G.K.-S."/>
            <person name="Wu Z."/>
            <person name="Paulsen I.T."/>
            <person name="Reizer J."/>
            <person name="Saier M.H. Jr."/>
            <person name="Hancock R.E.W."/>
            <person name="Lory S."/>
            <person name="Olson M.V."/>
        </authorList>
    </citation>
    <scope>NUCLEOTIDE SEQUENCE [LARGE SCALE GENOMIC DNA]</scope>
    <source>
        <strain>ATCC 15692 / DSM 22644 / CIP 104116 / JCM 14847 / LMG 12228 / 1C / PRS 101 / PAO1</strain>
    </source>
</reference>
<reference key="4">
    <citation type="journal article" date="2003" name="Proc. Natl. Acad. Sci. U.S.A.">
        <title>Crystal structure of the SOS cell division inhibitor SulA and in complex with FtsZ.</title>
        <authorList>
            <person name="Cordell S.C."/>
            <person name="Robinson E.J."/>
            <person name="Loewe J."/>
        </authorList>
    </citation>
    <scope>X-RAY CRYSTALLOGRAPHY (2.1 ANGSTROMS) OF 1-320 IN COMPLEX WITH SULA AND GDP</scope>
    <source>
        <strain>ATCC 15692 / DSM 22644 / CIP 104116 / JCM 14847 / LMG 12228 / 1C / PRS 101 / PAO1</strain>
    </source>
</reference>
<reference key="5">
    <citation type="journal article" date="2007" name="J. Mol. Biol.">
        <title>Structural insights into the conformational variability of FtsZ.</title>
        <authorList>
            <person name="Oliva M.A."/>
            <person name="Trambaiolo D."/>
            <person name="Lowe J."/>
        </authorList>
    </citation>
    <scope>X-RAY CRYSTALLOGRAPHY (2.9 ANGSTROMS) IN COMPLEX WITH GDP</scope>
</reference>
<sequence length="394" mass="41218">MFELVDNIAQTAVIKVIGVGGGGGNAVNHMAKNNVEGVEFICANTDAQALKNIAARTVLQLGPGVTKGLGAGANPEVGRQAALEDRERISEVLEGADMVFITTGMGGGTGTGAAPIIAEVAKEMGILTVAVVTRPFPFEGRKRMQIADEGIRALAESVDSLITIPNEKLLTILGKDASLLAAFAKADDVLAGAVRGISDIIKRPGMINVDFADVKTVMSEMGMAMMGTGCASGPNRAREATEAAIRNPLLEDVNLQGARGILVNITAGPDLSLGEYSDVGNIIEQFASEHATVKVGTVIDADMRDELHVTVVATGLGARLEKPVKVVDNTVQGSAAQAAAPAQREQQSVNYRDLDRPTVMRNQSHGSAATAAKLNPQDDLDYLDIPAFLRRQAD</sequence>
<accession>P47204</accession>
<feature type="chain" id="PRO_0000114371" description="Cell division protein FtsZ">
    <location>
        <begin position="1"/>
        <end position="394"/>
    </location>
</feature>
<feature type="binding site" evidence="1 2 3">
    <location>
        <begin position="21"/>
        <end position="25"/>
    </location>
    <ligand>
        <name>GTP</name>
        <dbReference type="ChEBI" id="CHEBI:37565"/>
    </ligand>
</feature>
<feature type="binding site" evidence="1 2 3">
    <location>
        <begin position="108"/>
        <end position="110"/>
    </location>
    <ligand>
        <name>GTP</name>
        <dbReference type="ChEBI" id="CHEBI:37565"/>
    </ligand>
</feature>
<feature type="binding site" evidence="1 2 3">
    <location>
        <position position="139"/>
    </location>
    <ligand>
        <name>GTP</name>
        <dbReference type="ChEBI" id="CHEBI:37565"/>
    </ligand>
</feature>
<feature type="binding site" evidence="1 2 3">
    <location>
        <position position="143"/>
    </location>
    <ligand>
        <name>GTP</name>
        <dbReference type="ChEBI" id="CHEBI:37565"/>
    </ligand>
</feature>
<feature type="binding site" evidence="1 2 3">
    <location>
        <position position="187"/>
    </location>
    <ligand>
        <name>GTP</name>
        <dbReference type="ChEBI" id="CHEBI:37565"/>
    </ligand>
</feature>
<feature type="turn" evidence="5">
    <location>
        <begin position="7"/>
        <end position="11"/>
    </location>
</feature>
<feature type="strand" evidence="4">
    <location>
        <begin position="14"/>
        <end position="19"/>
    </location>
</feature>
<feature type="helix" evidence="4">
    <location>
        <begin position="20"/>
        <end position="32"/>
    </location>
</feature>
<feature type="strand" evidence="4">
    <location>
        <begin position="37"/>
        <end position="46"/>
    </location>
</feature>
<feature type="helix" evidence="4">
    <location>
        <begin position="48"/>
        <end position="50"/>
    </location>
</feature>
<feature type="strand" evidence="4">
    <location>
        <begin position="56"/>
        <end position="60"/>
    </location>
</feature>
<feature type="helix" evidence="4">
    <location>
        <begin position="63"/>
        <end position="66"/>
    </location>
</feature>
<feature type="strand" evidence="5">
    <location>
        <begin position="67"/>
        <end position="69"/>
    </location>
</feature>
<feature type="helix" evidence="4">
    <location>
        <begin position="75"/>
        <end position="84"/>
    </location>
</feature>
<feature type="helix" evidence="4">
    <location>
        <begin position="86"/>
        <end position="93"/>
    </location>
</feature>
<feature type="strand" evidence="4">
    <location>
        <begin position="97"/>
        <end position="104"/>
    </location>
</feature>
<feature type="helix" evidence="4">
    <location>
        <begin position="109"/>
        <end position="123"/>
    </location>
</feature>
<feature type="strand" evidence="4">
    <location>
        <begin position="127"/>
        <end position="134"/>
    </location>
</feature>
<feature type="helix" evidence="4">
    <location>
        <begin position="137"/>
        <end position="139"/>
    </location>
</feature>
<feature type="helix" evidence="4">
    <location>
        <begin position="141"/>
        <end position="155"/>
    </location>
</feature>
<feature type="strand" evidence="4">
    <location>
        <begin position="159"/>
        <end position="165"/>
    </location>
</feature>
<feature type="helix" evidence="4">
    <location>
        <begin position="166"/>
        <end position="173"/>
    </location>
</feature>
<feature type="helix" evidence="4">
    <location>
        <begin position="174"/>
        <end position="176"/>
    </location>
</feature>
<feature type="helix" evidence="4">
    <location>
        <begin position="179"/>
        <end position="202"/>
    </location>
</feature>
<feature type="strand" evidence="4">
    <location>
        <begin position="205"/>
        <end position="208"/>
    </location>
</feature>
<feature type="helix" evidence="4">
    <location>
        <begin position="211"/>
        <end position="218"/>
    </location>
</feature>
<feature type="turn" evidence="5">
    <location>
        <begin position="219"/>
        <end position="221"/>
    </location>
</feature>
<feature type="strand" evidence="4">
    <location>
        <begin position="222"/>
        <end position="233"/>
    </location>
</feature>
<feature type="helix" evidence="4">
    <location>
        <begin position="236"/>
        <end position="245"/>
    </location>
</feature>
<feature type="helix" evidence="4">
    <location>
        <begin position="248"/>
        <end position="250"/>
    </location>
</feature>
<feature type="helix" evidence="4">
    <location>
        <begin position="255"/>
        <end position="257"/>
    </location>
</feature>
<feature type="strand" evidence="4">
    <location>
        <begin position="259"/>
        <end position="267"/>
    </location>
</feature>
<feature type="helix" evidence="4">
    <location>
        <begin position="273"/>
        <end position="286"/>
    </location>
</feature>
<feature type="strand" evidence="4">
    <location>
        <begin position="291"/>
        <end position="299"/>
    </location>
</feature>
<feature type="strand" evidence="4">
    <location>
        <begin position="305"/>
        <end position="315"/>
    </location>
</feature>
<protein>
    <recommendedName>
        <fullName evidence="1">Cell division protein FtsZ</fullName>
    </recommendedName>
</protein>
<name>FTSZ_PSEAE</name>
<keyword id="KW-0002">3D-structure</keyword>
<keyword id="KW-0131">Cell cycle</keyword>
<keyword id="KW-0132">Cell division</keyword>
<keyword id="KW-0963">Cytoplasm</keyword>
<keyword id="KW-0342">GTP-binding</keyword>
<keyword id="KW-0547">Nucleotide-binding</keyword>
<keyword id="KW-1185">Reference proteome</keyword>
<keyword id="KW-0717">Septation</keyword>
<organism>
    <name type="scientific">Pseudomonas aeruginosa (strain ATCC 15692 / DSM 22644 / CIP 104116 / JCM 14847 / LMG 12228 / 1C / PRS 101 / PAO1)</name>
    <dbReference type="NCBI Taxonomy" id="208964"/>
    <lineage>
        <taxon>Bacteria</taxon>
        <taxon>Pseudomonadati</taxon>
        <taxon>Pseudomonadota</taxon>
        <taxon>Gammaproteobacteria</taxon>
        <taxon>Pseudomonadales</taxon>
        <taxon>Pseudomonadaceae</taxon>
        <taxon>Pseudomonas</taxon>
    </lineage>
</organism>
<proteinExistence type="evidence at protein level"/>
<comment type="function">
    <text evidence="1">Essential cell division protein that forms a contractile ring structure (Z ring) at the future cell division site. The regulation of the ring assembly controls the timing and the location of cell division. One of the functions of the FtsZ ring is to recruit other cell division proteins to the septum to produce a new cell wall between the dividing cells. Binds GTP and shows GTPase activity.</text>
</comment>
<comment type="subunit">
    <text evidence="1 2">Homodimer. Polymerizes to form a dynamic ring structure in a strictly GTP-dependent manner (By similarity). Interacts directly with several other division proteins (By similarity). Interacts with the SulA inhibitor.</text>
</comment>
<comment type="subcellular location">
    <subcellularLocation>
        <location evidence="1">Cytoplasm</location>
    </subcellularLocation>
    <text evidence="1">Assembles at midcell at the inner surface of the cytoplasmic membrane.</text>
</comment>
<comment type="miscellaneous">
    <text>Formation of the FtsZ ring is inhibited by SulA.</text>
</comment>
<comment type="similarity">
    <text evidence="1">Belongs to the FtsZ family.</text>
</comment>
<evidence type="ECO:0000255" key="1">
    <source>
        <dbReference type="HAMAP-Rule" id="MF_00909"/>
    </source>
</evidence>
<evidence type="ECO:0000269" key="2">
    <source>
    </source>
</evidence>
<evidence type="ECO:0000269" key="3">
    <source>
    </source>
</evidence>
<evidence type="ECO:0007829" key="4">
    <source>
        <dbReference type="PDB" id="1OFU"/>
    </source>
</evidence>
<evidence type="ECO:0007829" key="5">
    <source>
        <dbReference type="PDB" id="2VAW"/>
    </source>
</evidence>
<gene>
    <name evidence="1" type="primary">ftsZ</name>
    <name type="ordered locus">PA4407</name>
</gene>
<dbReference type="EMBL" id="U19797">
    <property type="protein sequence ID" value="AAA95993.2"/>
    <property type="molecule type" value="Genomic_DNA"/>
</dbReference>
<dbReference type="EMBL" id="AE004091">
    <property type="protein sequence ID" value="AAG07795.1"/>
    <property type="molecule type" value="Genomic_DNA"/>
</dbReference>
<dbReference type="PIR" id="H83093">
    <property type="entry name" value="H83093"/>
</dbReference>
<dbReference type="RefSeq" id="NP_253097.1">
    <property type="nucleotide sequence ID" value="NC_002516.2"/>
</dbReference>
<dbReference type="RefSeq" id="WP_003094113.1">
    <property type="nucleotide sequence ID" value="NZ_QZGE01000004.1"/>
</dbReference>
<dbReference type="PDB" id="1OFU">
    <property type="method" value="X-ray"/>
    <property type="resolution" value="2.10 A"/>
    <property type="chains" value="A/B=1-320"/>
</dbReference>
<dbReference type="PDB" id="2VAW">
    <property type="method" value="X-ray"/>
    <property type="resolution" value="2.90 A"/>
    <property type="chains" value="A=1-394"/>
</dbReference>
<dbReference type="PDBsum" id="1OFU"/>
<dbReference type="PDBsum" id="2VAW"/>
<dbReference type="SMR" id="P47204"/>
<dbReference type="FunCoup" id="P47204">
    <property type="interactions" value="621"/>
</dbReference>
<dbReference type="IntAct" id="P47204">
    <property type="interactions" value="1"/>
</dbReference>
<dbReference type="STRING" id="208964.PA4407"/>
<dbReference type="BindingDB" id="P47204"/>
<dbReference type="ChEMBL" id="CHEMBL1075206"/>
<dbReference type="PaxDb" id="208964-PA4407"/>
<dbReference type="GeneID" id="881296"/>
<dbReference type="KEGG" id="pae:PA4407"/>
<dbReference type="PATRIC" id="fig|208964.12.peg.4616"/>
<dbReference type="PseudoCAP" id="PA4407"/>
<dbReference type="HOGENOM" id="CLU_024865_0_1_6"/>
<dbReference type="InParanoid" id="P47204"/>
<dbReference type="OrthoDB" id="9813375at2"/>
<dbReference type="PhylomeDB" id="P47204"/>
<dbReference type="BioCyc" id="PAER208964:G1FZ6-4494-MONOMER"/>
<dbReference type="EvolutionaryTrace" id="P47204"/>
<dbReference type="Proteomes" id="UP000002438">
    <property type="component" value="Chromosome"/>
</dbReference>
<dbReference type="GO" id="GO:0032153">
    <property type="term" value="C:cell division site"/>
    <property type="evidence" value="ECO:0000318"/>
    <property type="project" value="GO_Central"/>
</dbReference>
<dbReference type="GO" id="GO:0005737">
    <property type="term" value="C:cytoplasm"/>
    <property type="evidence" value="ECO:0000318"/>
    <property type="project" value="GO_Central"/>
</dbReference>
<dbReference type="GO" id="GO:0005525">
    <property type="term" value="F:GTP binding"/>
    <property type="evidence" value="ECO:0000318"/>
    <property type="project" value="GO_Central"/>
</dbReference>
<dbReference type="GO" id="GO:0003924">
    <property type="term" value="F:GTPase activity"/>
    <property type="evidence" value="ECO:0000318"/>
    <property type="project" value="GO_Central"/>
</dbReference>
<dbReference type="GO" id="GO:0051301">
    <property type="term" value="P:cell division"/>
    <property type="evidence" value="ECO:0000318"/>
    <property type="project" value="GO_Central"/>
</dbReference>
<dbReference type="GO" id="GO:0000917">
    <property type="term" value="P:division septum assembly"/>
    <property type="evidence" value="ECO:0007669"/>
    <property type="project" value="UniProtKB-KW"/>
</dbReference>
<dbReference type="GO" id="GO:0043093">
    <property type="term" value="P:FtsZ-dependent cytokinesis"/>
    <property type="evidence" value="ECO:0007669"/>
    <property type="project" value="UniProtKB-UniRule"/>
</dbReference>
<dbReference type="GO" id="GO:0051258">
    <property type="term" value="P:protein polymerization"/>
    <property type="evidence" value="ECO:0007669"/>
    <property type="project" value="UniProtKB-UniRule"/>
</dbReference>
<dbReference type="CDD" id="cd02201">
    <property type="entry name" value="FtsZ_type1"/>
    <property type="match status" value="1"/>
</dbReference>
<dbReference type="FunFam" id="3.30.1330.20:FF:000004">
    <property type="entry name" value="Cell division protein FtsZ"/>
    <property type="match status" value="1"/>
</dbReference>
<dbReference type="FunFam" id="3.40.50.1440:FF:000023">
    <property type="entry name" value="Cell division protein FtsZ"/>
    <property type="match status" value="1"/>
</dbReference>
<dbReference type="Gene3D" id="3.30.1330.20">
    <property type="entry name" value="Tubulin/FtsZ, C-terminal domain"/>
    <property type="match status" value="1"/>
</dbReference>
<dbReference type="Gene3D" id="3.40.50.1440">
    <property type="entry name" value="Tubulin/FtsZ, GTPase domain"/>
    <property type="match status" value="1"/>
</dbReference>
<dbReference type="HAMAP" id="MF_00909">
    <property type="entry name" value="FtsZ"/>
    <property type="match status" value="1"/>
</dbReference>
<dbReference type="InterPro" id="IPR000158">
    <property type="entry name" value="Cell_div_FtsZ"/>
</dbReference>
<dbReference type="InterPro" id="IPR020805">
    <property type="entry name" value="Cell_div_FtsZ_CS"/>
</dbReference>
<dbReference type="InterPro" id="IPR045061">
    <property type="entry name" value="FtsZ/CetZ"/>
</dbReference>
<dbReference type="InterPro" id="IPR024757">
    <property type="entry name" value="FtsZ_C"/>
</dbReference>
<dbReference type="InterPro" id="IPR008280">
    <property type="entry name" value="Tub_FtsZ_C"/>
</dbReference>
<dbReference type="InterPro" id="IPR037103">
    <property type="entry name" value="Tubulin/FtsZ-like_C"/>
</dbReference>
<dbReference type="InterPro" id="IPR018316">
    <property type="entry name" value="Tubulin/FtsZ_2-layer-sand-dom"/>
</dbReference>
<dbReference type="InterPro" id="IPR036525">
    <property type="entry name" value="Tubulin/FtsZ_GTPase_sf"/>
</dbReference>
<dbReference type="InterPro" id="IPR003008">
    <property type="entry name" value="Tubulin_FtsZ_GTPase"/>
</dbReference>
<dbReference type="NCBIfam" id="TIGR00065">
    <property type="entry name" value="ftsZ"/>
    <property type="match status" value="1"/>
</dbReference>
<dbReference type="PANTHER" id="PTHR30314">
    <property type="entry name" value="CELL DIVISION PROTEIN FTSZ-RELATED"/>
    <property type="match status" value="1"/>
</dbReference>
<dbReference type="PANTHER" id="PTHR30314:SF3">
    <property type="entry name" value="MITOCHONDRIAL DIVISION PROTEIN FSZA"/>
    <property type="match status" value="1"/>
</dbReference>
<dbReference type="Pfam" id="PF12327">
    <property type="entry name" value="FtsZ_C"/>
    <property type="match status" value="1"/>
</dbReference>
<dbReference type="Pfam" id="PF00091">
    <property type="entry name" value="Tubulin"/>
    <property type="match status" value="1"/>
</dbReference>
<dbReference type="PRINTS" id="PR00423">
    <property type="entry name" value="CELLDVISFTSZ"/>
</dbReference>
<dbReference type="SMART" id="SM00864">
    <property type="entry name" value="Tubulin"/>
    <property type="match status" value="1"/>
</dbReference>
<dbReference type="SMART" id="SM00865">
    <property type="entry name" value="Tubulin_C"/>
    <property type="match status" value="1"/>
</dbReference>
<dbReference type="SUPFAM" id="SSF55307">
    <property type="entry name" value="Tubulin C-terminal domain-like"/>
    <property type="match status" value="1"/>
</dbReference>
<dbReference type="SUPFAM" id="SSF52490">
    <property type="entry name" value="Tubulin nucleotide-binding domain-like"/>
    <property type="match status" value="1"/>
</dbReference>
<dbReference type="PROSITE" id="PS01134">
    <property type="entry name" value="FTSZ_1"/>
    <property type="match status" value="1"/>
</dbReference>
<dbReference type="PROSITE" id="PS01135">
    <property type="entry name" value="FTSZ_2"/>
    <property type="match status" value="1"/>
</dbReference>